<accession>Q2TA00</accession>
<dbReference type="EMBL" id="BC111188">
    <property type="protein sequence ID" value="AAI11189.1"/>
    <property type="molecule type" value="mRNA"/>
</dbReference>
<dbReference type="RefSeq" id="NP_001033307.1">
    <property type="nucleotide sequence ID" value="NM_001038218.2"/>
</dbReference>
<dbReference type="RefSeq" id="XP_015316604.1">
    <property type="nucleotide sequence ID" value="XM_015461118.1"/>
</dbReference>
<dbReference type="SMR" id="Q2TA00"/>
<dbReference type="FunCoup" id="Q2TA00">
    <property type="interactions" value="1"/>
</dbReference>
<dbReference type="STRING" id="9913.ENSBTAP00000014789"/>
<dbReference type="PaxDb" id="9913-ENSBTAP00000014789"/>
<dbReference type="GeneID" id="617342"/>
<dbReference type="KEGG" id="bta:617342"/>
<dbReference type="CTD" id="220047"/>
<dbReference type="eggNOG" id="ENOG502QS0V">
    <property type="taxonomic scope" value="Eukaryota"/>
</dbReference>
<dbReference type="HOGENOM" id="CLU_049886_0_0_1"/>
<dbReference type="InParanoid" id="Q2TA00"/>
<dbReference type="OrthoDB" id="10005859at2759"/>
<dbReference type="TreeFam" id="TF329512"/>
<dbReference type="Proteomes" id="UP000009136">
    <property type="component" value="Unplaced"/>
</dbReference>
<dbReference type="InterPro" id="IPR026702">
    <property type="entry name" value="CCDC83"/>
</dbReference>
<dbReference type="PANTHER" id="PTHR21468:SF1">
    <property type="entry name" value="COILED-COIL DOMAIN-CONTAINING PROTEIN 83"/>
    <property type="match status" value="1"/>
</dbReference>
<dbReference type="PANTHER" id="PTHR21468">
    <property type="entry name" value="HSD9"/>
    <property type="match status" value="1"/>
</dbReference>
<organism>
    <name type="scientific">Bos taurus</name>
    <name type="common">Bovine</name>
    <dbReference type="NCBI Taxonomy" id="9913"/>
    <lineage>
        <taxon>Eukaryota</taxon>
        <taxon>Metazoa</taxon>
        <taxon>Chordata</taxon>
        <taxon>Craniata</taxon>
        <taxon>Vertebrata</taxon>
        <taxon>Euteleostomi</taxon>
        <taxon>Mammalia</taxon>
        <taxon>Eutheria</taxon>
        <taxon>Laurasiatheria</taxon>
        <taxon>Artiodactyla</taxon>
        <taxon>Ruminantia</taxon>
        <taxon>Pecora</taxon>
        <taxon>Bovidae</taxon>
        <taxon>Bovinae</taxon>
        <taxon>Bos</taxon>
    </lineage>
</organism>
<sequence length="413" mass="48938">METAAKTNKRDIQDGPPKEVKLPISEALLDYHCQIKENALEQFMARIKKLREKNQKYHERNKRLKDEQIWHIRNLLKELSEEKSEGSVVVTREEVENAMKEKWKFERDQEQNLKDMRIQISNAEKLFLEKLSEKEYWEEYKNVGSEQHGKLITSLQNDINRVKENAEKMSEQYKITLEDARKRIIRETLLQLDQKKEWATENALRFIDKGSYREIWENDWLKKEIANHRKEVEELENAIHELEEENLVLIDQLFNCRLVDLKIPRRLYLTQAVGQEVPPEVPLELSETHKVIPEKSDSQPVDIKSRDVSSISFGSSGFRLSHKDSRFGQLLKIDEEASSSIEFGASDMKYLLYEDEQDFKDYVNLGPLEVKLMTVESKKMPIHFQEKETPVKFYEDVRSPESHITYKMMKSFL</sequence>
<keyword id="KW-0175">Coiled coil</keyword>
<keyword id="KW-1185">Reference proteome</keyword>
<proteinExistence type="evidence at transcript level"/>
<protein>
    <recommendedName>
        <fullName>Coiled-coil domain-containing protein 83</fullName>
    </recommendedName>
</protein>
<feature type="chain" id="PRO_0000288880" description="Coiled-coil domain-containing protein 83">
    <location>
        <begin position="1"/>
        <end position="413"/>
    </location>
</feature>
<feature type="coiled-coil region" evidence="1">
    <location>
        <begin position="32"/>
        <end position="186"/>
    </location>
</feature>
<feature type="coiled-coil region" evidence="1">
    <location>
        <begin position="215"/>
        <end position="255"/>
    </location>
</feature>
<gene>
    <name type="primary">CCDC83</name>
</gene>
<reference key="1">
    <citation type="submission" date="2005-12" db="EMBL/GenBank/DDBJ databases">
        <authorList>
            <consortium name="NIH - Mammalian Gene Collection (MGC) project"/>
        </authorList>
    </citation>
    <scope>NUCLEOTIDE SEQUENCE [LARGE SCALE MRNA]</scope>
    <source>
        <strain>Crossbred X Angus</strain>
        <tissue>Liver</tissue>
    </source>
</reference>
<evidence type="ECO:0000255" key="1"/>
<name>CCD83_BOVIN</name>